<organism>
    <name type="scientific">Homo sapiens</name>
    <name type="common">Human</name>
    <dbReference type="NCBI Taxonomy" id="9606"/>
    <lineage>
        <taxon>Eukaryota</taxon>
        <taxon>Metazoa</taxon>
        <taxon>Chordata</taxon>
        <taxon>Craniata</taxon>
        <taxon>Vertebrata</taxon>
        <taxon>Euteleostomi</taxon>
        <taxon>Mammalia</taxon>
        <taxon>Eutheria</taxon>
        <taxon>Euarchontoglires</taxon>
        <taxon>Primates</taxon>
        <taxon>Haplorrhini</taxon>
        <taxon>Catarrhini</taxon>
        <taxon>Hominidae</taxon>
        <taxon>Homo</taxon>
    </lineage>
</organism>
<gene>
    <name evidence="31" type="primary">ABCA12</name>
    <name type="synonym">ABC12</name>
</gene>
<name>ABCAC_HUMAN</name>
<sequence length="2595" mass="293237">MASLFHQLQILVWKNWLGVKRQPLWTLVLILWPVIIFIILAITRTKFPPTAKPTCYLAPRNLPSTGFFPFLQTLLCDTDSKCKDTPYGPQDLLRRKGIDDALFKDSEILRKSSNLDKDSSLSFQSTQVPERRHASLATVFPSPSSDLEIPGTYTFNGSQVLARILGLEKLLKQNSTSEDIRRELCDSYSGYIVDDAFSWTFLGRNVFNKFCLSNMTLLESSLQELNKQFSQLSSDPNNQKIVFQEIVRMLSFFSQVQEQKAVWQLLSSFPNVFQNDTSLSNLFDVLRKANSVLLVVQKVYPRFATNEGFRTLQKSVKHLLYTLDSPAQGDSDNITHVWNEDDGQTLSPSSLAAQLLILENFEDALLNISANSPYIPYLACVRNVTDSLARGSPENLRLLQSTIRFKKSFLRNGSYEDYFPPVPEVLKSKLSQLRNLTELLCESETFSLIEKSCQLSDMSFGSLCEESEFDLQLLEAAELGTEIAASLLYHDNVISKKVRDLLTGDPSKINLNMDQFLEQALQMNYLENITQLIPIIEAMLHVNNSADASEKPGQLLEMFKNVEELKEDLRRTTGMSNRTIDKLLAIPIPDNRAEIISQVFWLHSCDTNITTPKLEDAMKEFCNLSLSERSRQSYLIGLTLLHYLNIYNFTYKVFFPRKDQKPVEKMMELFIRLKEILNQMASGTHPLLDKMRSLKQMHLPRSVPLTQAMYRSNRMNTPQGSFSTISQALCSQGITTEYLTAMLPSSQRPKGNHTKDFLTYKLTKEQIASKYGIPINSTPFCFSLYKDIINMPAGPVIWAFLKPMLLGRILYAPYNPVTKAIMEKSNVTLRQLAELREKSQEWMDKSPLFMNSFHLLNQAIPMLQNTLRNPFVQVFVKFSVGLDAVELLKQIDELDILRLKLENNIDIIDQLNTLSSLTVNISSCVLYDRIQAAKTIDEMEREAKRLYKSNELFGSVIFKLPSNRSWHRGYDSGNVFLPPVIKYTIRMSLKTAQTTRSLRTKIWAPGPHNSPSHNQIYGRAFIYLQDSIERAIIELQTGRNSQEIAVQVQAIPYPCFMKDNFLTSVSYSLPIVLMVAWVVFIAAFVKKLVYEKDLRLHEYMKMMGVNSCSHFFAWLIESVGFLLVTIVILIIILKFGNILPKTNGFILFLYFSDYSFSVIAMSYLISVFFNNTNIAALIGSLIYIIAFFPFIVLVTVENELSYVLKVFMSLLSPTAFSYASQYIARYEEQGIGLQWENMYTSPVQDDTTSFGWLCCLILADSFIYFLIAWYVRNVFPGTYGMAAPWYFPILPSYWKERFGCAEVKPEKSNGLMFTNIMMQNTNPSASPEYMFSSNIEPEPKDLTVGVALHGVTKIYGSKVAVDNLNLNFYEGHITSLLGPNGAGKTTTISMLTGLFGASAGTIFVYGKDIKTDLHTVRKNMGVCMQHDVLFSYLTTKEHLLLYGSIKVPHWTKKQLHEEVKRTLKDTGLYSHRHKRVGTLSGGMKRKLSISIALIGGSRVVILDEPSTGVDPCSRRSIWDVISKNKTARTIILSTHHLDEAEVLSDRIAFLEQGGLRCCGSPFYLKEAFGDGYHLTLTKKKSPNLNANAVCDTMAVTAMIQSHLPEAYLKEDIGGELVYVLPPFSTKVSGAYLSLLRALDNGMGDLNIGCYGISDTTVEEVFLNLTKESQKNSAMSLEHLTQKKIGNSNANGISTPDDLSVSSSNFTDRDDKILTRGERLDGFGLLLKKIMAILIKRFHHTRRNWKGLIAQVILPIVFVTTAMGLGTLRNSSNSYPEIQISPSLYGTSEQTAFYANYHPSTEALVSAMWDFPGIDNMCLNTSDLQCLNKDSLEKWNTSGEPITNFGVCSCSENVQECPKFNYSPPHRRTYSSQVIYNLTGQRVENYLISTANEFVQKRYGGWSFGLPLTKDLRFDITGVPANRTLAKVWYDPEGYHSLPAYLNSLNNFLLRVNMSKYDAARHGIIMYSHPYPGVQDQEQATISSLIDILVALSILMGYSVTTASFVTYVVREHQTKAKQLQHISGIGVTCYWVTNFIYDMVFYLVPVAFSIGIIAIFKLPAFYSENNLGAVSLLLLLFGYATFSWMYLLAGLFHETGMAFITYVCVNLFFGINSIVSLSVVYFLSKEKPNDPTLELISETLKRIFLIFPQFCFGYGLIELSQQQSVLDFLKAYGVEYPNETFEMNKLGAMFVALVSQGTMFFSLRLLINESLIKKLRLFFRKFNSSHVRETIDEDEDVRAERLRVESGAAEFDLVQLYCLTKTYQLIHKKIIAVNNISIGIPAGECFGLLGVNGAGKTTIFKMLTGDIIPSSGNILIRNKTGSLGHVDSHSSLVGYCPQEDALDDLVTVEEHLYFYARVHGIPEKDIKETVHKLLRRLHLMPFKDRATSMCSYGTKRKLSTALALIGKPSILLLDEPSSGMDPKSKRHLWKIISEEVQNKCSVILTSHSMEECEALCTRLAIMVNGKFQCIGSLQHIKSRFGRGFTVKVHLKNNKVTMETLTKFMQLHFPKTYLKDQHLSMLEYHVPVTAGGVANIFDLLETNKTALNITNFLVSQTTLEEVFINFAKDQKSYETADTSSQGSTISVDSQDDQMES</sequence>
<dbReference type="EC" id="7.6.2.1" evidence="9 21"/>
<dbReference type="EMBL" id="AY219711">
    <property type="protein sequence ID" value="AAP21093.1"/>
    <property type="molecule type" value="mRNA"/>
</dbReference>
<dbReference type="EMBL" id="AY033486">
    <property type="protein sequence ID" value="AAK54355.1"/>
    <property type="molecule type" value="mRNA"/>
</dbReference>
<dbReference type="EMBL" id="AC072062">
    <property type="protein sequence ID" value="AAY24276.1"/>
    <property type="molecule type" value="Genomic_DNA"/>
</dbReference>
<dbReference type="EMBL" id="AC114780">
    <property type="protein sequence ID" value="AAY24230.1"/>
    <property type="molecule type" value="Genomic_DNA"/>
</dbReference>
<dbReference type="EMBL" id="AF418105">
    <property type="protein sequence ID" value="AAN40735.1"/>
    <property type="status" value="ALT_INIT"/>
    <property type="molecule type" value="mRNA"/>
</dbReference>
<dbReference type="EMBL" id="AL080207">
    <property type="protein sequence ID" value="CAB45776.1"/>
    <property type="molecule type" value="mRNA"/>
</dbReference>
<dbReference type="CCDS" id="CCDS33372.1">
    <molecule id="Q86UK0-1"/>
</dbReference>
<dbReference type="CCDS" id="CCDS33373.1">
    <molecule id="Q86UK0-2"/>
</dbReference>
<dbReference type="PIR" id="T12512">
    <property type="entry name" value="T12512"/>
</dbReference>
<dbReference type="RefSeq" id="NP_056472.2">
    <molecule id="Q86UK0-2"/>
    <property type="nucleotide sequence ID" value="NM_015657.3"/>
</dbReference>
<dbReference type="RefSeq" id="NP_775099.2">
    <molecule id="Q86UK0-1"/>
    <property type="nucleotide sequence ID" value="NM_173076.2"/>
</dbReference>
<dbReference type="SMR" id="Q86UK0"/>
<dbReference type="BioGRID" id="117585">
    <property type="interactions" value="11"/>
</dbReference>
<dbReference type="CORUM" id="Q86UK0"/>
<dbReference type="FunCoup" id="Q86UK0">
    <property type="interactions" value="78"/>
</dbReference>
<dbReference type="IntAct" id="Q86UK0">
    <property type="interactions" value="6"/>
</dbReference>
<dbReference type="MINT" id="Q86UK0"/>
<dbReference type="STRING" id="9606.ENSP00000272895"/>
<dbReference type="TCDB" id="3.A.1.211.13">
    <property type="family name" value="the atp-binding cassette (abc) superfamily"/>
</dbReference>
<dbReference type="GlyCosmos" id="Q86UK0">
    <property type="glycosylation" value="35 sites, No reported glycans"/>
</dbReference>
<dbReference type="GlyGen" id="Q86UK0">
    <property type="glycosylation" value="38 sites, 4 N-linked glycans (3 sites), 2 O-linked glycans (2 sites)"/>
</dbReference>
<dbReference type="iPTMnet" id="Q86UK0"/>
<dbReference type="PhosphoSitePlus" id="Q86UK0"/>
<dbReference type="SwissPalm" id="Q86UK0"/>
<dbReference type="BioMuta" id="ABCA12"/>
<dbReference type="DMDM" id="269849713"/>
<dbReference type="jPOST" id="Q86UK0"/>
<dbReference type="MassIVE" id="Q86UK0"/>
<dbReference type="PaxDb" id="9606-ENSP00000272895"/>
<dbReference type="PeptideAtlas" id="Q86UK0"/>
<dbReference type="ProteomicsDB" id="69821">
    <molecule id="Q86UK0-1"/>
</dbReference>
<dbReference type="ProteomicsDB" id="69822">
    <molecule id="Q86UK0-2"/>
</dbReference>
<dbReference type="Antibodypedia" id="34220">
    <property type="antibodies" value="141 antibodies from 26 providers"/>
</dbReference>
<dbReference type="DNASU" id="26154"/>
<dbReference type="Ensembl" id="ENST00000272895.12">
    <molecule id="Q86UK0-1"/>
    <property type="protein sequence ID" value="ENSP00000272895.7"/>
    <property type="gene ID" value="ENSG00000144452.15"/>
</dbReference>
<dbReference type="Ensembl" id="ENST00000389661.4">
    <molecule id="Q86UK0-2"/>
    <property type="protein sequence ID" value="ENSP00000374312.4"/>
    <property type="gene ID" value="ENSG00000144452.15"/>
</dbReference>
<dbReference type="GeneID" id="26154"/>
<dbReference type="KEGG" id="hsa:26154"/>
<dbReference type="MANE-Select" id="ENST00000272895.12">
    <property type="protein sequence ID" value="ENSP00000272895.7"/>
    <property type="RefSeq nucleotide sequence ID" value="NM_173076.3"/>
    <property type="RefSeq protein sequence ID" value="NP_775099.2"/>
</dbReference>
<dbReference type="UCSC" id="uc002vev.4">
    <molecule id="Q86UK0-1"/>
    <property type="organism name" value="human"/>
</dbReference>
<dbReference type="AGR" id="HGNC:14637"/>
<dbReference type="CTD" id="26154"/>
<dbReference type="DisGeNET" id="26154"/>
<dbReference type="GeneCards" id="ABCA12"/>
<dbReference type="GeneReviews" id="ABCA12"/>
<dbReference type="HGNC" id="HGNC:14637">
    <property type="gene designation" value="ABCA12"/>
</dbReference>
<dbReference type="HPA" id="ENSG00000144452">
    <property type="expression patterns" value="Tissue enhanced (breast, skin)"/>
</dbReference>
<dbReference type="MalaCards" id="ABCA12"/>
<dbReference type="MIM" id="242500">
    <property type="type" value="phenotype"/>
</dbReference>
<dbReference type="MIM" id="601277">
    <property type="type" value="phenotype"/>
</dbReference>
<dbReference type="MIM" id="607800">
    <property type="type" value="gene"/>
</dbReference>
<dbReference type="neXtProt" id="NX_Q86UK0"/>
<dbReference type="OpenTargets" id="ENSG00000144452"/>
<dbReference type="Orphanet" id="79394">
    <property type="disease" value="Congenital ichthyosiform erythroderma"/>
</dbReference>
<dbReference type="Orphanet" id="457">
    <property type="disease" value="Harlequin ichthyosis"/>
</dbReference>
<dbReference type="Orphanet" id="313">
    <property type="disease" value="Lamellar ichthyosis"/>
</dbReference>
<dbReference type="PharmGKB" id="PA29604"/>
<dbReference type="VEuPathDB" id="HostDB:ENSG00000144452"/>
<dbReference type="eggNOG" id="KOG0059">
    <property type="taxonomic scope" value="Eukaryota"/>
</dbReference>
<dbReference type="GeneTree" id="ENSGT00940000157295"/>
<dbReference type="HOGENOM" id="CLU_000604_19_7_1"/>
<dbReference type="InParanoid" id="Q86UK0"/>
<dbReference type="OMA" id="TYIVREH"/>
<dbReference type="OrthoDB" id="10255969at2759"/>
<dbReference type="PAN-GO" id="Q86UK0">
    <property type="GO annotations" value="5 GO annotations based on evolutionary models"/>
</dbReference>
<dbReference type="PhylomeDB" id="Q86UK0"/>
<dbReference type="TreeFam" id="TF105191"/>
<dbReference type="PathwayCommons" id="Q86UK0"/>
<dbReference type="Reactome" id="R-HSA-1369062">
    <property type="pathway name" value="ABC transporters in lipid homeostasis"/>
</dbReference>
<dbReference type="Reactome" id="R-HSA-5682294">
    <property type="pathway name" value="Defective ABCA12 causes ARCI4B"/>
</dbReference>
<dbReference type="SignaLink" id="Q86UK0"/>
<dbReference type="BioGRID-ORCS" id="26154">
    <property type="hits" value="6 hits in 1147 CRISPR screens"/>
</dbReference>
<dbReference type="ChiTaRS" id="ABCA12">
    <property type="organism name" value="human"/>
</dbReference>
<dbReference type="GeneWiki" id="ABCA12"/>
<dbReference type="GenomeRNAi" id="26154"/>
<dbReference type="Pharos" id="Q86UK0">
    <property type="development level" value="Tbio"/>
</dbReference>
<dbReference type="PRO" id="PR:Q86UK0"/>
<dbReference type="Proteomes" id="UP000005640">
    <property type="component" value="Chromosome 2"/>
</dbReference>
<dbReference type="RNAct" id="Q86UK0">
    <property type="molecule type" value="protein"/>
</dbReference>
<dbReference type="Bgee" id="ENSG00000144452">
    <property type="expression patterns" value="Expressed in penis and 75 other cell types or tissues"/>
</dbReference>
<dbReference type="ExpressionAtlas" id="Q86UK0">
    <property type="expression patterns" value="baseline and differential"/>
</dbReference>
<dbReference type="GO" id="GO:0005737">
    <property type="term" value="C:cytoplasm"/>
    <property type="evidence" value="ECO:0000314"/>
    <property type="project" value="BHF-UCL"/>
</dbReference>
<dbReference type="GO" id="GO:0005829">
    <property type="term" value="C:cytosol"/>
    <property type="evidence" value="ECO:0007669"/>
    <property type="project" value="Ensembl"/>
</dbReference>
<dbReference type="GO" id="GO:0097209">
    <property type="term" value="C:epidermal lamellar body"/>
    <property type="evidence" value="ECO:0000314"/>
    <property type="project" value="BHF-UCL"/>
</dbReference>
<dbReference type="GO" id="GO:0097234">
    <property type="term" value="C:epidermal lamellar body membrane"/>
    <property type="evidence" value="ECO:0000314"/>
    <property type="project" value="UniProtKB"/>
</dbReference>
<dbReference type="GO" id="GO:0000139">
    <property type="term" value="C:Golgi membrane"/>
    <property type="evidence" value="ECO:0000314"/>
    <property type="project" value="UniProtKB"/>
</dbReference>
<dbReference type="GO" id="GO:0043231">
    <property type="term" value="C:intracellular membrane-bounded organelle"/>
    <property type="evidence" value="ECO:0000318"/>
    <property type="project" value="GO_Central"/>
</dbReference>
<dbReference type="GO" id="GO:0016020">
    <property type="term" value="C:membrane"/>
    <property type="evidence" value="ECO:0000303"/>
    <property type="project" value="UniProtKB"/>
</dbReference>
<dbReference type="GO" id="GO:0005886">
    <property type="term" value="C:plasma membrane"/>
    <property type="evidence" value="ECO:0000314"/>
    <property type="project" value="BHF-UCL"/>
</dbReference>
<dbReference type="GO" id="GO:0030658">
    <property type="term" value="C:transport vesicle membrane"/>
    <property type="evidence" value="ECO:0007669"/>
    <property type="project" value="UniProtKB-SubCell"/>
</dbReference>
<dbReference type="GO" id="GO:0140359">
    <property type="term" value="F:ABC-type transporter activity"/>
    <property type="evidence" value="ECO:0007669"/>
    <property type="project" value="InterPro"/>
</dbReference>
<dbReference type="GO" id="GO:0034191">
    <property type="term" value="F:apolipoprotein A-I receptor binding"/>
    <property type="evidence" value="ECO:0000353"/>
    <property type="project" value="BHF-UCL"/>
</dbReference>
<dbReference type="GO" id="GO:0005524">
    <property type="term" value="F:ATP binding"/>
    <property type="evidence" value="ECO:0000303"/>
    <property type="project" value="UniProtKB"/>
</dbReference>
<dbReference type="GO" id="GO:0016887">
    <property type="term" value="F:ATP hydrolysis activity"/>
    <property type="evidence" value="ECO:0007669"/>
    <property type="project" value="InterPro"/>
</dbReference>
<dbReference type="GO" id="GO:0140326">
    <property type="term" value="F:ATPase-coupled intramembrane lipid transporter activity"/>
    <property type="evidence" value="ECO:0007669"/>
    <property type="project" value="UniProtKB-EC"/>
</dbReference>
<dbReference type="GO" id="GO:0034040">
    <property type="term" value="F:ATPase-coupled lipid transmembrane transporter activity"/>
    <property type="evidence" value="ECO:0000305"/>
    <property type="project" value="BHF-UCL"/>
</dbReference>
<dbReference type="GO" id="GO:0042626">
    <property type="term" value="F:ATPase-coupled transmembrane transporter activity"/>
    <property type="evidence" value="ECO:0000318"/>
    <property type="project" value="GO_Central"/>
</dbReference>
<dbReference type="GO" id="GO:0005319">
    <property type="term" value="F:lipid transporter activity"/>
    <property type="evidence" value="ECO:0000314"/>
    <property type="project" value="BHF-UCL"/>
</dbReference>
<dbReference type="GO" id="GO:0005102">
    <property type="term" value="F:signaling receptor binding"/>
    <property type="evidence" value="ECO:0000353"/>
    <property type="project" value="BHF-UCL"/>
</dbReference>
<dbReference type="GO" id="GO:0019725">
    <property type="term" value="P:cellular homeostasis"/>
    <property type="evidence" value="ECO:0000303"/>
    <property type="project" value="UniProtKB"/>
</dbReference>
<dbReference type="GO" id="GO:0006672">
    <property type="term" value="P:ceramide metabolic process"/>
    <property type="evidence" value="ECO:0000314"/>
    <property type="project" value="UniProtKB"/>
</dbReference>
<dbReference type="GO" id="GO:0035627">
    <property type="term" value="P:ceramide transport"/>
    <property type="evidence" value="ECO:0000314"/>
    <property type="project" value="UniProtKB"/>
</dbReference>
<dbReference type="GO" id="GO:0033344">
    <property type="term" value="P:cholesterol efflux"/>
    <property type="evidence" value="ECO:0007669"/>
    <property type="project" value="Ensembl"/>
</dbReference>
<dbReference type="GO" id="GO:0003336">
    <property type="term" value="P:corneocyte desquamation"/>
    <property type="evidence" value="ECO:0000315"/>
    <property type="project" value="UniProtKB"/>
</dbReference>
<dbReference type="GO" id="GO:0061436">
    <property type="term" value="P:establishment of skin barrier"/>
    <property type="evidence" value="ECO:0000250"/>
    <property type="project" value="UniProtKB"/>
</dbReference>
<dbReference type="GO" id="GO:0006886">
    <property type="term" value="P:intracellular protein transport"/>
    <property type="evidence" value="ECO:0000315"/>
    <property type="project" value="UniProtKB"/>
</dbReference>
<dbReference type="GO" id="GO:0031424">
    <property type="term" value="P:keratinization"/>
    <property type="evidence" value="ECO:0007669"/>
    <property type="project" value="Ensembl"/>
</dbReference>
<dbReference type="GO" id="GO:0055088">
    <property type="term" value="P:lipid homeostasis"/>
    <property type="evidence" value="ECO:0007669"/>
    <property type="project" value="Ensembl"/>
</dbReference>
<dbReference type="GO" id="GO:0006869">
    <property type="term" value="P:lipid transport"/>
    <property type="evidence" value="ECO:0000314"/>
    <property type="project" value="BHF-UCL"/>
</dbReference>
<dbReference type="GO" id="GO:0048286">
    <property type="term" value="P:lung alveolus development"/>
    <property type="evidence" value="ECO:0007669"/>
    <property type="project" value="Ensembl"/>
</dbReference>
<dbReference type="GO" id="GO:0033700">
    <property type="term" value="P:phospholipid efflux"/>
    <property type="evidence" value="ECO:0000315"/>
    <property type="project" value="BHF-UCL"/>
</dbReference>
<dbReference type="GO" id="GO:0010875">
    <property type="term" value="P:positive regulation of cholesterol efflux"/>
    <property type="evidence" value="ECO:0000314"/>
    <property type="project" value="BHF-UCL"/>
</dbReference>
<dbReference type="GO" id="GO:0032379">
    <property type="term" value="P:positive regulation of intracellular lipid transport"/>
    <property type="evidence" value="ECO:0000250"/>
    <property type="project" value="UniProtKB"/>
</dbReference>
<dbReference type="GO" id="GO:2000010">
    <property type="term" value="P:positive regulation of protein localization to cell surface"/>
    <property type="evidence" value="ECO:0007669"/>
    <property type="project" value="Ensembl"/>
</dbReference>
<dbReference type="GO" id="GO:0072659">
    <property type="term" value="P:protein localization to plasma membrane"/>
    <property type="evidence" value="ECO:0000314"/>
    <property type="project" value="BHF-UCL"/>
</dbReference>
<dbReference type="GO" id="GO:0045055">
    <property type="term" value="P:regulated exocytosis"/>
    <property type="evidence" value="ECO:0000315"/>
    <property type="project" value="BHF-UCL"/>
</dbReference>
<dbReference type="GO" id="GO:0061178">
    <property type="term" value="P:regulation of insulin secretion involved in cellular response to glucose stimulus"/>
    <property type="evidence" value="ECO:0000250"/>
    <property type="project" value="UniProtKB"/>
</dbReference>
<dbReference type="GO" id="GO:0045616">
    <property type="term" value="P:regulation of keratinocyte differentiation"/>
    <property type="evidence" value="ECO:0000315"/>
    <property type="project" value="UniProtKB"/>
</dbReference>
<dbReference type="GO" id="GO:0032940">
    <property type="term" value="P:secretion by cell"/>
    <property type="evidence" value="ECO:0000315"/>
    <property type="project" value="BHF-UCL"/>
</dbReference>
<dbReference type="GO" id="GO:0043129">
    <property type="term" value="P:surfactant homeostasis"/>
    <property type="evidence" value="ECO:0007669"/>
    <property type="project" value="Ensembl"/>
</dbReference>
<dbReference type="CDD" id="cd03263">
    <property type="entry name" value="ABC_subfamily_A"/>
    <property type="match status" value="2"/>
</dbReference>
<dbReference type="FunFam" id="3.40.50.300:FF:000689">
    <property type="entry name" value="ATP binding cassette subfamily A member 12"/>
    <property type="match status" value="1"/>
</dbReference>
<dbReference type="FunFam" id="3.40.50.300:FF:000298">
    <property type="entry name" value="ATP-binding cassette sub-family A member 12"/>
    <property type="match status" value="1"/>
</dbReference>
<dbReference type="Gene3D" id="3.40.50.300">
    <property type="entry name" value="P-loop containing nucleotide triphosphate hydrolases"/>
    <property type="match status" value="2"/>
</dbReference>
<dbReference type="InterPro" id="IPR003593">
    <property type="entry name" value="AAA+_ATPase"/>
</dbReference>
<dbReference type="InterPro" id="IPR013525">
    <property type="entry name" value="ABC2_TM"/>
</dbReference>
<dbReference type="InterPro" id="IPR003439">
    <property type="entry name" value="ABC_transporter-like_ATP-bd"/>
</dbReference>
<dbReference type="InterPro" id="IPR017871">
    <property type="entry name" value="ABC_transporter-like_CS"/>
</dbReference>
<dbReference type="InterPro" id="IPR026082">
    <property type="entry name" value="ABCA"/>
</dbReference>
<dbReference type="InterPro" id="IPR027417">
    <property type="entry name" value="P-loop_NTPase"/>
</dbReference>
<dbReference type="InterPro" id="IPR056264">
    <property type="entry name" value="R2_ABCA1-4-like"/>
</dbReference>
<dbReference type="PANTHER" id="PTHR19229:SF250">
    <property type="entry name" value="ABC TRANSPORTER DOMAIN-CONTAINING PROTEIN-RELATED"/>
    <property type="match status" value="1"/>
</dbReference>
<dbReference type="PANTHER" id="PTHR19229">
    <property type="entry name" value="ATP-BINDING CASSETTE TRANSPORTER SUBFAMILY A ABCA"/>
    <property type="match status" value="1"/>
</dbReference>
<dbReference type="Pfam" id="PF12698">
    <property type="entry name" value="ABC2_membrane_3"/>
    <property type="match status" value="2"/>
</dbReference>
<dbReference type="Pfam" id="PF00005">
    <property type="entry name" value="ABC_tran"/>
    <property type="match status" value="2"/>
</dbReference>
<dbReference type="Pfam" id="PF23321">
    <property type="entry name" value="R1_ABCA1"/>
    <property type="match status" value="1"/>
</dbReference>
<dbReference type="SMART" id="SM00382">
    <property type="entry name" value="AAA"/>
    <property type="match status" value="2"/>
</dbReference>
<dbReference type="SUPFAM" id="SSF52540">
    <property type="entry name" value="P-loop containing nucleoside triphosphate hydrolases"/>
    <property type="match status" value="2"/>
</dbReference>
<dbReference type="PROSITE" id="PS00211">
    <property type="entry name" value="ABC_TRANSPORTER_1"/>
    <property type="match status" value="1"/>
</dbReference>
<dbReference type="PROSITE" id="PS50893">
    <property type="entry name" value="ABC_TRANSPORTER_2"/>
    <property type="match status" value="2"/>
</dbReference>
<reference key="1">
    <citation type="journal article" date="2002" name="Cytogenet. Genome Res.">
        <title>Identification and characterization of a novel ABCA subfamily member, ABCA12, located in the lamellar ichthyosis region on 2q34.</title>
        <authorList>
            <person name="Annilo T."/>
            <person name="Shulemin S."/>
            <person name="Chen Z.Q."/>
            <person name="Arnould I."/>
            <person name="Prades C."/>
            <person name="Lemoine C."/>
            <person name="Maintoux-Larois C."/>
            <person name="Devaud C."/>
            <person name="Dean M."/>
            <person name="Denefle P."/>
            <person name="Rosier M."/>
        </authorList>
    </citation>
    <scope>NUCLEOTIDE SEQUENCE [MRNA] (ISOFORM 1)</scope>
    <scope>TISSUE SPECIFICITY</scope>
    <scope>VARIANT THR-777</scope>
    <source>
        <tissue>Placenta</tissue>
    </source>
</reference>
<reference key="2">
    <citation type="submission" date="2001-04" db="EMBL/GenBank/DDBJ databases">
        <title>A retinal cDNA for the ATP-binding cassette transporter ABCA12.</title>
        <authorList>
            <person name="Bonner T.I."/>
            <person name="Moses T."/>
            <person name="Detera-Wadleigh S."/>
        </authorList>
    </citation>
    <scope>NUCLEOTIDE SEQUENCE [MRNA] (ISOFORM 2)</scope>
    <scope>VARIANT THR-777</scope>
    <source>
        <tissue>Retina</tissue>
    </source>
</reference>
<reference key="3">
    <citation type="journal article" date="2005" name="Nature">
        <title>Generation and annotation of the DNA sequences of human chromosomes 2 and 4.</title>
        <authorList>
            <person name="Hillier L.W."/>
            <person name="Graves T.A."/>
            <person name="Fulton R.S."/>
            <person name="Fulton L.A."/>
            <person name="Pepin K.H."/>
            <person name="Minx P."/>
            <person name="Wagner-McPherson C."/>
            <person name="Layman D."/>
            <person name="Wylie K."/>
            <person name="Sekhon M."/>
            <person name="Becker M.C."/>
            <person name="Fewell G.A."/>
            <person name="Delehaunty K.D."/>
            <person name="Miner T.L."/>
            <person name="Nash W.E."/>
            <person name="Kremitzki C."/>
            <person name="Oddy L."/>
            <person name="Du H."/>
            <person name="Sun H."/>
            <person name="Bradshaw-Cordum H."/>
            <person name="Ali J."/>
            <person name="Carter J."/>
            <person name="Cordes M."/>
            <person name="Harris A."/>
            <person name="Isak A."/>
            <person name="van Brunt A."/>
            <person name="Nguyen C."/>
            <person name="Du F."/>
            <person name="Courtney L."/>
            <person name="Kalicki J."/>
            <person name="Ozersky P."/>
            <person name="Abbott S."/>
            <person name="Armstrong J."/>
            <person name="Belter E.A."/>
            <person name="Caruso L."/>
            <person name="Cedroni M."/>
            <person name="Cotton M."/>
            <person name="Davidson T."/>
            <person name="Desai A."/>
            <person name="Elliott G."/>
            <person name="Erb T."/>
            <person name="Fronick C."/>
            <person name="Gaige T."/>
            <person name="Haakenson W."/>
            <person name="Haglund K."/>
            <person name="Holmes A."/>
            <person name="Harkins R."/>
            <person name="Kim K."/>
            <person name="Kruchowski S.S."/>
            <person name="Strong C.M."/>
            <person name="Grewal N."/>
            <person name="Goyea E."/>
            <person name="Hou S."/>
            <person name="Levy A."/>
            <person name="Martinka S."/>
            <person name="Mead K."/>
            <person name="McLellan M.D."/>
            <person name="Meyer R."/>
            <person name="Randall-Maher J."/>
            <person name="Tomlinson C."/>
            <person name="Dauphin-Kohlberg S."/>
            <person name="Kozlowicz-Reilly A."/>
            <person name="Shah N."/>
            <person name="Swearengen-Shahid S."/>
            <person name="Snider J."/>
            <person name="Strong J.T."/>
            <person name="Thompson J."/>
            <person name="Yoakum M."/>
            <person name="Leonard S."/>
            <person name="Pearman C."/>
            <person name="Trani L."/>
            <person name="Radionenko M."/>
            <person name="Waligorski J.E."/>
            <person name="Wang C."/>
            <person name="Rock S.M."/>
            <person name="Tin-Wollam A.-M."/>
            <person name="Maupin R."/>
            <person name="Latreille P."/>
            <person name="Wendl M.C."/>
            <person name="Yang S.-P."/>
            <person name="Pohl C."/>
            <person name="Wallis J.W."/>
            <person name="Spieth J."/>
            <person name="Bieri T.A."/>
            <person name="Berkowicz N."/>
            <person name="Nelson J.O."/>
            <person name="Osborne J."/>
            <person name="Ding L."/>
            <person name="Meyer R."/>
            <person name="Sabo A."/>
            <person name="Shotland Y."/>
            <person name="Sinha P."/>
            <person name="Wohldmann P.E."/>
            <person name="Cook L.L."/>
            <person name="Hickenbotham M.T."/>
            <person name="Eldred J."/>
            <person name="Williams D."/>
            <person name="Jones T.A."/>
            <person name="She X."/>
            <person name="Ciccarelli F.D."/>
            <person name="Izaurralde E."/>
            <person name="Taylor J."/>
            <person name="Schmutz J."/>
            <person name="Myers R.M."/>
            <person name="Cox D.R."/>
            <person name="Huang X."/>
            <person name="McPherson J.D."/>
            <person name="Mardis E.R."/>
            <person name="Clifton S.W."/>
            <person name="Warren W.C."/>
            <person name="Chinwalla A.T."/>
            <person name="Eddy S.R."/>
            <person name="Marra M.A."/>
            <person name="Ovcharenko I."/>
            <person name="Furey T.S."/>
            <person name="Miller W."/>
            <person name="Eichler E.E."/>
            <person name="Bork P."/>
            <person name="Suyama M."/>
            <person name="Torrents D."/>
            <person name="Waterston R.H."/>
            <person name="Wilson R.K."/>
        </authorList>
    </citation>
    <scope>NUCLEOTIDE SEQUENCE [LARGE SCALE GENOMIC DNA]</scope>
</reference>
<reference key="4">
    <citation type="submission" date="2001-09" db="EMBL/GenBank/DDBJ databases">
        <title>Cloning of a novel ABC transporter (ABCA12) tentatively involved in lipid homeostatis.</title>
        <authorList>
            <person name="Schaap F.G."/>
            <person name="van Wijland M."/>
            <person name="Groen A.K."/>
        </authorList>
    </citation>
    <scope>NUCLEOTIDE SEQUENCE [MRNA] OF 221-2595</scope>
    <scope>VARIANT THR-777</scope>
</reference>
<reference key="5">
    <citation type="journal article" date="2007" name="BMC Genomics">
        <title>The full-ORF clone resource of the German cDNA consortium.</title>
        <authorList>
            <person name="Bechtel S."/>
            <person name="Rosenfelder H."/>
            <person name="Duda A."/>
            <person name="Schmidt C.P."/>
            <person name="Ernst U."/>
            <person name="Wellenreuther R."/>
            <person name="Mehrle A."/>
            <person name="Schuster C."/>
            <person name="Bahr A."/>
            <person name="Bloecker H."/>
            <person name="Heubner D."/>
            <person name="Hoerlein A."/>
            <person name="Michel G."/>
            <person name="Wedler H."/>
            <person name="Koehrer K."/>
            <person name="Ottenwaelder B."/>
            <person name="Poustka A."/>
            <person name="Wiemann S."/>
            <person name="Schupp I."/>
        </authorList>
    </citation>
    <scope>NUCLEOTIDE SEQUENCE [LARGE SCALE MRNA] OF 2400-2595</scope>
    <source>
        <tissue>Testis</tissue>
    </source>
</reference>
<reference key="6">
    <citation type="journal article" date="2005" name="J. Clin. Invest.">
        <title>Mutations in lipid transporter ABCA12 in harlequin ichthyosis and functional recovery by corrective gene transfer.</title>
        <authorList>
            <person name="Akiyama M."/>
            <person name="Sugiyama-Nakagiri Y."/>
            <person name="Sakai K."/>
            <person name="McMillan J.R."/>
            <person name="Goto M."/>
            <person name="Arita K."/>
            <person name="Tsuji-Abe Y."/>
            <person name="Tabata N."/>
            <person name="Matsuoka K."/>
            <person name="Sasaki R."/>
            <person name="Sawamura D."/>
            <person name="Shimizu H."/>
        </authorList>
    </citation>
    <scope>TISSUE SPECIFICITY</scope>
    <scope>INDUCTION</scope>
    <scope>SUBCELLULAR LOCATION</scope>
    <scope>FUNCTION</scope>
    <scope>VARIANTS ARCI4B 434-ARG--SER-2595 DEL; THR-1385 DEL AND 1950-ARG--SER-2595 DEL</scope>
    <scope>CATALYTIC ACTIVITY</scope>
</reference>
<reference key="7">
    <citation type="journal article" date="2007" name="Am. J. Pathol.">
        <title>Expression of the keratinocyte lipid transporter ABCA12 in developing and reconstituted human epidermis.</title>
        <authorList>
            <person name="Yamanaka Y."/>
            <person name="Akiyama M."/>
            <person name="Sugiyama-Nakagiri Y."/>
            <person name="Sakai K."/>
            <person name="Goto M."/>
            <person name="McMillan J.R."/>
            <person name="Ota M."/>
            <person name="Sawamura D."/>
            <person name="Shimizu H."/>
        </authorList>
    </citation>
    <scope>DEVELOPMENTAL STAGE</scope>
    <scope>TISSUE SPECIFICITY</scope>
    <scope>INDUCTION</scope>
</reference>
<reference key="8">
    <citation type="journal article" date="2007" name="Exp. Dermatol.">
        <title>Localization of ABCA12 from Golgi apparatus to lamellar granules in human upper epidermal keratinocytes.</title>
        <authorList>
            <person name="Sakai K."/>
            <person name="Akiyama M."/>
            <person name="Sugiyama-Nakagiri Y."/>
            <person name="McMillan J.R."/>
            <person name="Sawamura D."/>
            <person name="Shimizu H."/>
        </authorList>
    </citation>
    <scope>TISSUE SPECIFICITY</scope>
    <scope>SUBCELLULAR LOCATION</scope>
    <scope>FUNCTION</scope>
</reference>
<reference key="9">
    <citation type="journal article" date="2008" name="J. Invest. Dermatol.">
        <title>PPAR and LXR activators regulate ABCA12 expression in human keratinocytes.</title>
        <authorList>
            <person name="Jiang Y.J."/>
            <person name="Lu B."/>
            <person name="Kim P."/>
            <person name="Paragh G."/>
            <person name="Schmitz G."/>
            <person name="Elias P.M."/>
            <person name="Feingold K.R."/>
        </authorList>
    </citation>
    <scope>INDUCTION</scope>
</reference>
<reference key="10">
    <citation type="journal article" date="2009" name="Am. J. Pathol.">
        <title>Premature terminal differentiation and a reduction in specific proteases associated with loss of ABCA12 in Harlequin ichthyosis.</title>
        <authorList>
            <person name="Thomas A.C."/>
            <person name="Tattersall D."/>
            <person name="Norgett E.E."/>
            <person name="O'Toole E.A."/>
            <person name="Kelsell D.P."/>
        </authorList>
    </citation>
    <scope>TISSUE SPECIFICITY</scope>
    <scope>FUNCTION</scope>
</reference>
<reference key="11">
    <citation type="journal article" date="2009" name="J. Biol. Chem.">
        <title>Ceramide stimulates ABCA12 expression via peroxisome proliferator-activated receptor {delta} in human keratinocytes.</title>
        <authorList>
            <person name="Jiang Y.J."/>
            <person name="Uchida Y."/>
            <person name="Lu B."/>
            <person name="Kim P."/>
            <person name="Mao C."/>
            <person name="Akiyama M."/>
            <person name="Elias P.M."/>
            <person name="Holleran W.M."/>
            <person name="Grunfeld C."/>
            <person name="Feingold K.R."/>
        </authorList>
    </citation>
    <scope>INDUCTION</scope>
</reference>
<reference key="12">
    <citation type="journal article" date="2010" name="J. Dermatol. Sci.">
        <title>ABCA12 dysfunction causes a disorder in glucosylceramide accumulation during keratinocyte differentiation.</title>
        <authorList>
            <person name="Mitsutake S."/>
            <person name="Suzuki C."/>
            <person name="Akiyama M."/>
            <person name="Tsuji K."/>
            <person name="Yanagi T."/>
            <person name="Shimizu H."/>
            <person name="Igarashi Y."/>
        </authorList>
    </citation>
    <scope>FUNCTION</scope>
    <scope>CATALYTIC ACTIVITY</scope>
</reference>
<reference key="13">
    <citation type="journal article" date="2020" name="EMBO Rep.">
        <title>ABCA12 regulates insulin secretion from beta-cells.</title>
        <authorList>
            <person name="Ursino G.M."/>
            <person name="Fu Y."/>
            <person name="Cottle D.L."/>
            <person name="Mukhamedova N."/>
            <person name="Jones L.K."/>
            <person name="Low H."/>
            <person name="Tham M.S."/>
            <person name="Gan W.J."/>
            <person name="Mellett N.A."/>
            <person name="Das P.P."/>
            <person name="Weir J.M."/>
            <person name="Ditiatkovski M."/>
            <person name="Fynch S."/>
            <person name="Thorn P."/>
            <person name="Thomas H.E."/>
            <person name="Meikle P.J."/>
            <person name="Parkington H.C."/>
            <person name="Smyth I.M."/>
            <person name="Sviridov D."/>
        </authorList>
    </citation>
    <scope>TISSUE SPECIFICITY</scope>
</reference>
<reference key="14">
    <citation type="journal article" date="2010" name="Hum. Mutat.">
        <title>ABCA12 mutations and autosomal recessive congenital ichthyosis: a review of genotype/phenotype correlations and of pathogenetic concepts.</title>
        <authorList>
            <person name="Akiyama M."/>
        </authorList>
    </citation>
    <scope>REVIEW ON VARIANTS</scope>
    <scope>INVOLVEMENT IN ARCI</scope>
</reference>
<reference key="15">
    <citation type="journal article" date="2003" name="Hum. Mol. Genet.">
        <title>Mutations in the transporter ABCA12 are associated with lamellar ichthyosis type 2.</title>
        <authorList>
            <person name="Lefevre C."/>
            <person name="Audebert S."/>
            <person name="Jobard F."/>
            <person name="Bouadjar B."/>
            <person name="Lakhdar H."/>
            <person name="Boughdene-Stambouli O."/>
            <person name="Blanchet-Bardon C."/>
            <person name="Heilig R."/>
            <person name="Foglio M."/>
            <person name="Weissenbach J."/>
            <person name="Lathrop M."/>
            <person name="Prud'homme J.F."/>
            <person name="Fischer J."/>
        </authorList>
    </citation>
    <scope>VARIANTS ARCI4A SER-1380; GLU-1381; HIS-1514; LYS-1539 AND SER-1651</scope>
</reference>
<reference key="16">
    <citation type="journal article" date="2005" name="Am. J. Hum. Genet.">
        <title>Mutations in ABCA12 underlie the severe congenital skin disease harlequin ichthyosis.</title>
        <authorList>
            <person name="Kelsell D.P."/>
            <person name="Norgett E.E."/>
            <person name="Unsworth H."/>
            <person name="Teh M.-T."/>
            <person name="Cullup T."/>
            <person name="Mein C.A."/>
            <person name="Dopping-Hepenstal P.J."/>
            <person name="Dale B.A."/>
            <person name="Tadini G."/>
            <person name="Fleckman P."/>
            <person name="Stephens K.G."/>
            <person name="Sybert V.P."/>
            <person name="Mallory S.B."/>
            <person name="North B.V."/>
            <person name="Witt D.R."/>
            <person name="Sprecher E."/>
            <person name="Taylor A.E.M."/>
            <person name="Ilchyshyn A."/>
            <person name="Kennedy C.T."/>
            <person name="Goodyear H."/>
            <person name="Moss C."/>
            <person name="Paige D."/>
            <person name="Harper J.I."/>
            <person name="Young B.D."/>
            <person name="Leigh I.M."/>
            <person name="Eady R.A.J."/>
            <person name="O'Toole E.A."/>
        </authorList>
    </citation>
    <scope>VARIANT ASN-2365</scope>
</reference>
<reference key="17">
    <citation type="journal article" date="2006" name="J. Invest. Dermatol.">
        <title>Compound heterozygous mutations including a de novo missense mutation in ABCA12 led to a case of harlequin ichthyosis with moderate clinical severity.</title>
        <authorList>
            <person name="Akiyama M."/>
            <person name="Sakai K."/>
            <person name="Sugiyama-Nakagiri Y."/>
            <person name="Yamanaka Y."/>
            <person name="McMillan J.R."/>
            <person name="Sawamura D."/>
            <person name="Niizeki H."/>
            <person name="Miyagawa S."/>
            <person name="Shimizu H."/>
        </authorList>
    </citation>
    <scope>VARIANT ARCI4B ASN-387</scope>
</reference>
<reference key="18">
    <citation type="journal article" date="2006" name="J. Invest. Dermatol.">
        <title>ABCA12 is the major harlequin ichthyosis gene.</title>
        <authorList>
            <person name="Thomas A.C."/>
            <person name="Cullup T."/>
            <person name="Norgett E.E."/>
            <person name="Hill T."/>
            <person name="Barton S."/>
            <person name="Dale B.A."/>
            <person name="Sprecher E."/>
            <person name="Sheridan E."/>
            <person name="Taylor A.E."/>
            <person name="Wilroy R.S."/>
            <person name="DeLozier C."/>
            <person name="Burrows N."/>
            <person name="Goodyear H."/>
            <person name="Fleckman P."/>
            <person name="Stephens K.G."/>
            <person name="Mehta L."/>
            <person name="Watson R.M."/>
            <person name="Graham R."/>
            <person name="Wolf R."/>
            <person name="Slavotinek A."/>
            <person name="Martin M."/>
            <person name="Bourn D."/>
            <person name="Mein C.A."/>
            <person name="O'Toole E.A."/>
            <person name="Kelsell D.P."/>
        </authorList>
    </citation>
    <scope>VARIANT ARCI4B ARG-1179</scope>
</reference>
<reference key="19">
    <citation type="journal article" date="2007" name="J. Invest. Dermatol.">
        <title>Novel ABCA12 mutations identified in two cases of non-bullous congenital ichthyosiform erythroderma associated with multiple skin malignant neoplasia.</title>
        <authorList>
            <person name="Natsuga K."/>
            <person name="Akiyama M."/>
            <person name="Kato N."/>
            <person name="Sakai K."/>
            <person name="Sugiyama-Nakagiri Y."/>
            <person name="Nishimura M."/>
            <person name="Hata H."/>
            <person name="Abe M."/>
            <person name="Arita K."/>
            <person name="Tsuji-Abe Y."/>
            <person name="Onozuka T."/>
            <person name="Aoyagi S."/>
            <person name="Kodama K."/>
            <person name="Ujiie H."/>
            <person name="Tomita Y."/>
            <person name="Shimizu H."/>
        </authorList>
    </citation>
    <scope>VARIANTS ARCI4A PRO-345 AND THR-1494</scope>
</reference>
<reference key="20">
    <citation type="journal article" date="2008" name="Br. J. Dermatol.">
        <title>Novel compound heterozygous nonsense and missense ABCA12 mutations lead to nonbullous congenital ichthyosiform erythroderma.</title>
        <authorList>
            <person name="Akiyama M."/>
            <person name="Sakai K."/>
            <person name="Hatamochi A."/>
            <person name="Yamazaki S."/>
            <person name="McMillan J.R."/>
            <person name="Shimizu H."/>
        </authorList>
    </citation>
    <scope>VARIANT ARCI4A ASP-1136</scope>
</reference>
<reference key="21">
    <citation type="journal article" date="2008" name="Science">
        <title>Core signaling pathways in human pancreatic cancers revealed by global genomic analyses.</title>
        <authorList>
            <person name="Jones S."/>
            <person name="Zhang X."/>
            <person name="Parsons D.W."/>
            <person name="Lin J.C."/>
            <person name="Leary R.J."/>
            <person name="Angenendt P."/>
            <person name="Mankoo P."/>
            <person name="Carter H."/>
            <person name="Kamiyama H."/>
            <person name="Jimeno A."/>
            <person name="Hong S.M."/>
            <person name="Fu B."/>
            <person name="Lin M.T."/>
            <person name="Calhoun E.S."/>
            <person name="Kamiyama M."/>
            <person name="Walter K."/>
            <person name="Nikolskaya T."/>
            <person name="Nikolsky Y."/>
            <person name="Hartigan J."/>
            <person name="Smith D.R."/>
            <person name="Hidalgo M."/>
            <person name="Leach S.D."/>
            <person name="Klein A.P."/>
            <person name="Jaffee E.M."/>
            <person name="Goggins M."/>
            <person name="Maitra A."/>
            <person name="Iacobuzio-Donahue C."/>
            <person name="Eshleman J.R."/>
            <person name="Kern S.E."/>
            <person name="Hruban R.H."/>
            <person name="Karchin R."/>
            <person name="Papadopoulos N."/>
            <person name="Parmigiani G."/>
            <person name="Vogelstein B."/>
            <person name="Velculescu V.E."/>
            <person name="Kinzler K.W."/>
        </authorList>
    </citation>
    <scope>VARIANT [LARGE SCALE ANALYSIS] VAL-476</scope>
</reference>
<reference key="22">
    <citation type="journal article" date="2009" name="J. Invest. Dermatol.">
        <title>ABCA12 is a major causative gene for non-bullous congenital ichthyosiform erythroderma.</title>
        <authorList>
            <person name="Sakai K."/>
            <person name="Akiyama M."/>
            <person name="Yanagi T."/>
            <person name="McMillan J.R."/>
            <person name="Suzuki T."/>
            <person name="Tsukamoto K."/>
            <person name="Sugiyama H."/>
            <person name="Hatano Y."/>
            <person name="Hayashitani M."/>
            <person name="Takamori K."/>
            <person name="Nakashima K."/>
            <person name="Shimizu H."/>
        </authorList>
    </citation>
    <scope>VARIANTS ARCI4A SER-1235; HIS-1514; LEU-1798 AND LYS-1980</scope>
</reference>
<reference key="23">
    <citation type="journal article" date="2012" name="Eur. J. Dermatol.">
        <title>Non-bullous congenital ichthyosiform erythroderma associated with homozygosity for a novel missense mutation in an ATP binding domain of ABCA12.</title>
        <authorList>
            <person name="Nawaz S."/>
            <person name="Tariq M."/>
            <person name="Ahmad I."/>
            <person name="Malik N.A."/>
            <person name="Baig S.M."/>
            <person name="Dahl N."/>
            <person name="Klar J."/>
        </authorList>
    </citation>
    <scope>VARIANT ARCI4A VAL-1559</scope>
</reference>
<feature type="chain" id="PRO_0000093300" description="Glucosylceramide transporter ABCA12">
    <location>
        <begin position="1"/>
        <end position="2595"/>
    </location>
</feature>
<feature type="transmembrane region" description="Helical" evidence="3">
    <location>
        <begin position="23"/>
        <end position="43"/>
    </location>
</feature>
<feature type="transmembrane region" description="Helical" evidence="3">
    <location>
        <begin position="1065"/>
        <end position="1085"/>
    </location>
</feature>
<feature type="transmembrane region" description="Helical" evidence="3">
    <location>
        <begin position="1112"/>
        <end position="1132"/>
    </location>
</feature>
<feature type="transmembrane region" description="Helical" evidence="3">
    <location>
        <begin position="1145"/>
        <end position="1165"/>
    </location>
</feature>
<feature type="transmembrane region" description="Helical" evidence="3">
    <location>
        <begin position="1174"/>
        <end position="1194"/>
    </location>
</feature>
<feature type="transmembrane region" description="Helical" evidence="3">
    <location>
        <begin position="1200"/>
        <end position="1220"/>
    </location>
</feature>
<feature type="transmembrane region" description="Helical" evidence="3">
    <location>
        <begin position="1250"/>
        <end position="1270"/>
    </location>
</feature>
<feature type="transmembrane region" description="Helical" evidence="3">
    <location>
        <begin position="1747"/>
        <end position="1767"/>
    </location>
</feature>
<feature type="transmembrane region" description="Helical" evidence="3">
    <location>
        <begin position="1979"/>
        <end position="1999"/>
    </location>
</feature>
<feature type="transmembrane region" description="Helical" evidence="3">
    <location>
        <begin position="2035"/>
        <end position="2055"/>
    </location>
</feature>
<feature type="transmembrane region" description="Helical" evidence="3">
    <location>
        <begin position="2072"/>
        <end position="2092"/>
    </location>
</feature>
<feature type="transmembrane region" description="Helical" evidence="3">
    <location>
        <begin position="2103"/>
        <end position="2123"/>
    </location>
</feature>
<feature type="transmembrane region" description="Helical" evidence="3">
    <location>
        <begin position="2187"/>
        <end position="2207"/>
    </location>
</feature>
<feature type="transmembrane region" description="Helical" evidence="3">
    <location>
        <begin position="2270"/>
        <end position="2290"/>
    </location>
</feature>
<feature type="domain" description="ABC transporter 1" evidence="4">
    <location>
        <begin position="1346"/>
        <end position="1577"/>
    </location>
</feature>
<feature type="domain" description="ABC transporter 2" evidence="4">
    <location>
        <begin position="2254"/>
        <end position="2489"/>
    </location>
</feature>
<feature type="region of interest" description="Disordered" evidence="5">
    <location>
        <begin position="2571"/>
        <end position="2595"/>
    </location>
</feature>
<feature type="compositionally biased region" description="Polar residues" evidence="5">
    <location>
        <begin position="2574"/>
        <end position="2587"/>
    </location>
</feature>
<feature type="binding site" evidence="4">
    <location>
        <begin position="1378"/>
        <end position="1385"/>
    </location>
    <ligand>
        <name>ATP</name>
        <dbReference type="ChEBI" id="CHEBI:30616"/>
        <label>1</label>
    </ligand>
</feature>
<feature type="binding site" evidence="4">
    <location>
        <begin position="2290"/>
        <end position="2297"/>
    </location>
    <ligand>
        <name>ATP</name>
        <dbReference type="ChEBI" id="CHEBI:30616"/>
        <label>2</label>
    </ligand>
</feature>
<feature type="glycosylation site" description="N-linked (GlcNAc...) asparagine" evidence="3">
    <location>
        <position position="156"/>
    </location>
</feature>
<feature type="glycosylation site" description="N-linked (GlcNAc...) asparagine" evidence="3">
    <location>
        <position position="174"/>
    </location>
</feature>
<feature type="glycosylation site" description="N-linked (GlcNAc...) asparagine" evidence="3">
    <location>
        <position position="214"/>
    </location>
</feature>
<feature type="glycosylation site" description="N-linked (GlcNAc...) asparagine" evidence="3">
    <location>
        <position position="275"/>
    </location>
</feature>
<feature type="glycosylation site" description="N-linked (GlcNAc...) asparagine" evidence="3">
    <location>
        <position position="333"/>
    </location>
</feature>
<feature type="glycosylation site" description="N-linked (GlcNAc...) asparagine" evidence="3">
    <location>
        <position position="367"/>
    </location>
</feature>
<feature type="glycosylation site" description="N-linked (GlcNAc...) asparagine" evidence="3">
    <location>
        <position position="383"/>
    </location>
</feature>
<feature type="glycosylation site" description="N-linked (GlcNAc...) asparagine" evidence="3">
    <location>
        <position position="412"/>
    </location>
</feature>
<feature type="glycosylation site" description="N-linked (GlcNAc...) asparagine" evidence="3">
    <location>
        <position position="435"/>
    </location>
</feature>
<feature type="glycosylation site" description="N-linked (GlcNAc...) asparagine" evidence="3">
    <location>
        <position position="528"/>
    </location>
</feature>
<feature type="glycosylation site" description="N-linked (GlcNAc...) asparagine" evidence="3">
    <location>
        <position position="543"/>
    </location>
</feature>
<feature type="glycosylation site" description="N-linked (GlcNAc...) asparagine" evidence="3">
    <location>
        <position position="577"/>
    </location>
</feature>
<feature type="glycosylation site" description="N-linked (GlcNAc...) asparagine" evidence="3">
    <location>
        <position position="608"/>
    </location>
</feature>
<feature type="glycosylation site" description="N-linked (GlcNAc...) asparagine" evidence="3">
    <location>
        <position position="623"/>
    </location>
</feature>
<feature type="glycosylation site" description="N-linked (GlcNAc...) asparagine" evidence="3">
    <location>
        <position position="648"/>
    </location>
</feature>
<feature type="glycosylation site" description="N-linked (GlcNAc...) asparagine" evidence="3">
    <location>
        <position position="752"/>
    </location>
</feature>
<feature type="glycosylation site" description="N-linked (GlcNAc...) asparagine" evidence="3">
    <location>
        <position position="826"/>
    </location>
</feature>
<feature type="glycosylation site" description="N-linked (GlcNAc...) asparagine" evidence="3">
    <location>
        <position position="920"/>
    </location>
</feature>
<feature type="glycosylation site" description="N-linked (GlcNAc...) asparagine" evidence="3">
    <location>
        <position position="963"/>
    </location>
</feature>
<feature type="glycosylation site" description="N-linked (GlcNAc...) asparagine" evidence="3">
    <location>
        <position position="1170"/>
    </location>
</feature>
<feature type="glycosylation site" description="N-linked (GlcNAc...) asparagine" evidence="3">
    <location>
        <position position="1524"/>
    </location>
</feature>
<feature type="glycosylation site" description="N-linked (GlcNAc...) asparagine" evidence="3">
    <location>
        <position position="1663"/>
    </location>
</feature>
<feature type="glycosylation site" description="N-linked (GlcNAc...) asparagine" evidence="3">
    <location>
        <position position="1704"/>
    </location>
</feature>
<feature type="glycosylation site" description="N-linked (GlcNAc...) asparagine" evidence="3">
    <location>
        <position position="1769"/>
    </location>
</feature>
<feature type="glycosylation site" description="N-linked (GlcNAc...) asparagine" evidence="3">
    <location>
        <position position="1819"/>
    </location>
</feature>
<feature type="glycosylation site" description="N-linked (GlcNAc...) asparagine" evidence="3">
    <location>
        <position position="1835"/>
    </location>
</feature>
<feature type="glycosylation site" description="N-linked (GlcNAc...) asparagine" evidence="3">
    <location>
        <position position="1876"/>
    </location>
</feature>
<feature type="glycosylation site" description="N-linked (GlcNAc...) asparagine" evidence="3">
    <location>
        <position position="1921"/>
    </location>
</feature>
<feature type="glycosylation site" description="N-linked (GlcNAc...) asparagine" evidence="3">
    <location>
        <position position="1952"/>
    </location>
</feature>
<feature type="glycosylation site" description="N-linked (GlcNAc...) asparagine" evidence="3">
    <location>
        <position position="2178"/>
    </location>
</feature>
<feature type="glycosylation site" description="N-linked (GlcNAc...) asparagine" evidence="3">
    <location>
        <position position="2208"/>
    </location>
</feature>
<feature type="glycosylation site" description="N-linked (GlcNAc...) asparagine" evidence="3">
    <location>
        <position position="2223"/>
    </location>
</feature>
<feature type="glycosylation site" description="N-linked (GlcNAc...) asparagine" evidence="3">
    <location>
        <position position="2318"/>
    </location>
</feature>
<feature type="glycosylation site" description="N-linked (GlcNAc...) asparagine" evidence="3">
    <location>
        <position position="2542"/>
    </location>
</feature>
<feature type="glycosylation site" description="N-linked (GlcNAc...) asparagine" evidence="3">
    <location>
        <position position="2547"/>
    </location>
</feature>
<feature type="splice variant" id="VSP_011283" description="In isoform 2." evidence="26">
    <location>
        <begin position="1"/>
        <end position="318"/>
    </location>
</feature>
<feature type="splice variant" id="VSP_011284" description="In isoform 2." evidence="26">
    <original>LLYTLDSPAQ</original>
    <variation>MFTYIKIITS</variation>
    <location>
        <begin position="319"/>
        <end position="328"/>
    </location>
</feature>
<feature type="sequence variant" id="VAR_055473" description="In dbSNP:rs16853238.">
    <original>W</original>
    <variation>C</variation>
    <location>
        <position position="199"/>
    </location>
</feature>
<feature type="sequence variant" id="VAR_055474" description="In dbSNP:rs11890512.">
    <original>N</original>
    <variation>H</variation>
    <location>
        <position position="237"/>
    </location>
</feature>
<feature type="sequence variant" id="VAR_055475" description="In dbSNP:rs11890468.">
    <original>Q</original>
    <variation>R</variation>
    <location>
        <position position="274"/>
    </location>
</feature>
<feature type="sequence variant" id="VAR_055476" description="In dbSNP:rs11891778.">
    <original>R</original>
    <variation>G</variation>
    <location>
        <position position="287"/>
    </location>
</feature>
<feature type="sequence variant" id="VAR_067075" description="In ARCI4A; skin phenotype consistent with non-bullous congenital ichthyosiform erythroderma; dbSNP:rs1295935868." evidence="12">
    <original>T</original>
    <variation>P</variation>
    <location>
        <position position="345"/>
    </location>
</feature>
<feature type="sequence variant" id="VAR_067076" description="In ARCI4B; dbSNP:rs746315995." evidence="10">
    <original>S</original>
    <variation>N</variation>
    <location>
        <position position="387"/>
    </location>
</feature>
<feature type="sequence variant" id="VAR_084428" description="In ARCI4B." evidence="9">
    <location>
        <begin position="434"/>
        <end position="2595"/>
    </location>
</feature>
<feature type="sequence variant" id="VAR_019597" description="In dbSNP:rs113112835.">
    <original>S</original>
    <variation>T</variation>
    <location>
        <position position="459"/>
    </location>
</feature>
<feature type="sequence variant" id="VAR_062663" description="In a pancreatic ductal adenocarcinoma sample; somatic mutation; dbSNP:rs370640837." evidence="17">
    <original>A</original>
    <variation>V</variation>
    <location>
        <position position="476"/>
    </location>
</feature>
<feature type="sequence variant" id="VAR_027444" description="In dbSNP:rs16853149.">
    <original>E</original>
    <variation>G</variation>
    <location>
        <position position="550"/>
    </location>
</feature>
<feature type="sequence variant" id="VAR_027445" description="In dbSNP:rs7560008." evidence="6 24 25">
    <original>S</original>
    <variation>T</variation>
    <location>
        <position position="777"/>
    </location>
</feature>
<feature type="sequence variant" id="VAR_067077" description="In ARCI4A; skin phenotype consistent with non-bullous congenital ichthyosiform erythroderma." evidence="16">
    <original>G</original>
    <variation>D</variation>
    <location>
        <position position="1136"/>
    </location>
</feature>
<feature type="sequence variant" id="VAR_067078" description="In ARCI4B; dbSNP:rs267606622." evidence="11">
    <original>G</original>
    <variation>R</variation>
    <location>
        <position position="1179"/>
    </location>
</feature>
<feature type="sequence variant" id="VAR_067079" description="In ARCI4A; skin phenotype consistent with non-bullous congenital ichthyosiform erythroderma; dbSNP:rs2105975227." evidence="19">
    <original>W</original>
    <variation>S</variation>
    <location>
        <position position="1235"/>
    </location>
</feature>
<feature type="sequence variant" id="VAR_027446" description="In dbSNP:rs13414448.">
    <original>G</original>
    <variation>D</variation>
    <location>
        <position position="1251"/>
    </location>
</feature>
<feature type="sequence variant" id="VAR_019598" description="In ARCI4A; dbSNP:rs28940269." evidence="7">
    <original>N</original>
    <variation>S</variation>
    <location>
        <position position="1380"/>
    </location>
</feature>
<feature type="sequence variant" id="VAR_019599" description="In ARCI4A; dbSNP:rs28940268." evidence="7">
    <original>G</original>
    <variation>E</variation>
    <location>
        <position position="1381"/>
    </location>
</feature>
<feature type="sequence variant" id="VAR_084429" description="In ARCI4B; uncertain significance." evidence="9">
    <location>
        <position position="1385"/>
    </location>
</feature>
<feature type="sequence variant" id="VAR_067080" description="In ARCI4A; skin phenotype consistent with non-bullous congenital ichthyosiform erythroderma; dbSNP:rs1263698595." evidence="12">
    <original>I</original>
    <variation>T</variation>
    <location>
        <position position="1494"/>
    </location>
</feature>
<feature type="sequence variant" id="VAR_019600" description="In ARCI4A; dbSNP:rs28940270." evidence="7 19">
    <original>R</original>
    <variation>H</variation>
    <location>
        <position position="1514"/>
    </location>
</feature>
<feature type="sequence variant" id="VAR_019601" description="In ARCI4A; dbSNP:rs28940271." evidence="7">
    <original>E</original>
    <variation>K</variation>
    <location>
        <position position="1539"/>
    </location>
</feature>
<feature type="sequence variant" id="VAR_027447" description="In dbSNP:rs13401480.">
    <original>R</original>
    <variation>C</variation>
    <location>
        <position position="1546"/>
    </location>
</feature>
<feature type="sequence variant" id="VAR_067081" description="In ARCI4A; skin phenotype consistent with non-bullous congenital ichthyosiform erythroderma; dbSNP:rs1457513156." evidence="22">
    <original>G</original>
    <variation>V</variation>
    <location>
        <position position="1559"/>
    </location>
</feature>
<feature type="sequence variant" id="VAR_019602" description="In ARCI4A; dbSNP:rs28940568." evidence="7">
    <original>G</original>
    <variation>S</variation>
    <location>
        <position position="1651"/>
    </location>
</feature>
<feature type="sequence variant" id="VAR_067082" description="In ARCI4A; skin phenotype consistent with non-bullous congenital ichthyosiform erythroderma; dbSNP:rs181314573." evidence="19">
    <original>P</original>
    <variation>L</variation>
    <location>
        <position position="1798"/>
    </location>
</feature>
<feature type="sequence variant" id="VAR_084430" description="In ARCI4B; uncertain significance." evidence="9">
    <location>
        <begin position="1950"/>
        <end position="2595"/>
    </location>
</feature>
<feature type="sequence variant" id="VAR_067083" description="In ARCI4A; skin phenotype consistent with non-bullous congenital ichthyosiform erythroderma; dbSNP:rs763858530." evidence="19">
    <original>T</original>
    <variation>K</variation>
    <location>
        <position position="1980"/>
    </location>
</feature>
<feature type="sequence variant" id="VAR_027448" description="In dbSNP:rs1213011.">
    <original>E</original>
    <variation>K</variation>
    <location>
        <position position="2064"/>
    </location>
</feature>
<feature type="sequence variant" id="VAR_027449" description="In dbSNP:rs726070." evidence="8">
    <original>D</original>
    <variation>N</variation>
    <location>
        <position position="2365"/>
    </location>
</feature>
<feature type="sequence conflict" description="In Ref. 1; AAP21093." evidence="27" ref="1">
    <original>Y</original>
    <variation>D</variation>
    <location>
        <position position="651"/>
    </location>
</feature>
<feature type="sequence conflict" description="In Ref. 1; AAP21093." evidence="27" ref="1">
    <original>Y</original>
    <variation>H</variation>
    <location>
        <position position="811"/>
    </location>
</feature>
<feature type="sequence conflict" description="In Ref. 2; AAK54355." evidence="27" ref="2">
    <original>N</original>
    <variation>D</variation>
    <location>
        <position position="826"/>
    </location>
</feature>
<feature type="sequence conflict" description="In Ref. 1; AAP21093." evidence="27" ref="1">
    <original>Y</original>
    <variation>H</variation>
    <location>
        <position position="2079"/>
    </location>
</feature>
<keyword id="KW-0025">Alternative splicing</keyword>
<keyword id="KW-0067">ATP-binding</keyword>
<keyword id="KW-0968">Cytoplasmic vesicle</keyword>
<keyword id="KW-0225">Disease variant</keyword>
<keyword id="KW-0325">Glycoprotein</keyword>
<keyword id="KW-0333">Golgi apparatus</keyword>
<keyword id="KW-0977">Ichthyosis</keyword>
<keyword id="KW-0445">Lipid transport</keyword>
<keyword id="KW-0472">Membrane</keyword>
<keyword id="KW-0547">Nucleotide-binding</keyword>
<keyword id="KW-1267">Proteomics identification</keyword>
<keyword id="KW-1185">Reference proteome</keyword>
<keyword id="KW-0677">Repeat</keyword>
<keyword id="KW-1278">Translocase</keyword>
<keyword id="KW-0812">Transmembrane</keyword>
<keyword id="KW-1133">Transmembrane helix</keyword>
<keyword id="KW-0813">Transport</keyword>
<proteinExistence type="evidence at protein level"/>
<protein>
    <recommendedName>
        <fullName evidence="27">Glucosylceramide transporter ABCA12</fullName>
        <ecNumber evidence="9 21">7.6.2.1</ecNumber>
    </recommendedName>
    <alternativeName>
        <fullName>ATP-binding cassette sub-family A member 12</fullName>
    </alternativeName>
    <alternativeName>
        <fullName>ATP-binding cassette transporter 12</fullName>
        <shortName>ATP-binding cassette 12</shortName>
    </alternativeName>
</protein>
<comment type="function">
    <text evidence="2 9 18 21">Transports lipids such as glucosylceramides from the outer to the inner leaflet of lamellar granules (LGs) membrane, whereby the lipids are finally transported to the keratinocyte periphery via the trans-Golgi network and LGs and released to the apical surface of the granular keratinocytes to form lipid lamellae in the stratum corneum of the epidermis, which is essential for skin barrier function (PubMed:16007253, PubMed:20869849). In the meantime, participates in the transport of the lamellar granules-associated proteolytic enzymes, in turn regulates desquamation and keratinocyte differentiation (PubMed:19179616). Furthermore, is essential for the regulation of cellular cholesterol homeostasis by regulating ABCA1-dependent cholesterol efflux from macrophages through interaction with NR1H2 and ABCA1 (By similarity). Plays pleiotropic roles in regulating glucose stimulated insulin secretion from beta cells, regulating the morphology and fusion of insulin granules, lipid raft abundance and the actin cytoskeleton (By similarity). Also involved in lung surfactant biogenesis (By similarity).</text>
</comment>
<comment type="catalytic activity">
    <reaction evidence="9 21">
        <text>ATP + H2O + phospholipidSide 1 = ADP + phosphate + phospholipidSide 2.</text>
        <dbReference type="EC" id="7.6.2.1"/>
    </reaction>
</comment>
<comment type="catalytic activity">
    <reaction evidence="9 21">
        <text>a beta-D-glucosylceramide(in) + ATP + H2O = a beta-D-glucosylceramide(out) + ADP + phosphate + H(+)</text>
        <dbReference type="Rhea" id="RHEA:66660"/>
        <dbReference type="ChEBI" id="CHEBI:15377"/>
        <dbReference type="ChEBI" id="CHEBI:15378"/>
        <dbReference type="ChEBI" id="CHEBI:30616"/>
        <dbReference type="ChEBI" id="CHEBI:43474"/>
        <dbReference type="ChEBI" id="CHEBI:83264"/>
        <dbReference type="ChEBI" id="CHEBI:456216"/>
    </reaction>
    <physiologicalReaction direction="left-to-right" evidence="28 30">
        <dbReference type="Rhea" id="RHEA:66661"/>
    </physiologicalReaction>
</comment>
<comment type="subunit">
    <text evidence="2">Interacts with NR1H2 and ABCA1; this interaction is required for ABCA1 localization to the cell surface and is necessary for its normal activity and stability.</text>
</comment>
<comment type="interaction">
    <interactant intactId="EBI-9541582">
        <id>Q86UK0</id>
    </interactant>
    <interactant intactId="EBI-784112">
        <id>O95477</id>
        <label>ABCA1</label>
    </interactant>
    <organismsDiffer>false</organismsDiffer>
    <experiments>4</experiments>
</comment>
<comment type="subcellular location">
    <subcellularLocation>
        <location evidence="9 15">Cytoplasmic vesicle</location>
        <location evidence="9 15">Secretory vesicle membrane</location>
        <topology evidence="27">Multi-pass membrane protein</topology>
    </subcellularLocation>
    <subcellularLocation>
        <location evidence="15">Golgi apparatus membrane</location>
    </subcellularLocation>
    <text evidence="9 15">Localizes in the limiting membrane of the lamellar granules (LGs) (PubMed:17927575). Trafficks from the Golgi apparatus to the lamellar granules (LGs) at the cell periphery in the uppermost granular layer keratinocytes where ABCA12-positive LGs fuse with the keratinocyte-cell membrane to secrete their lipid content to the extracellular space of the stratum corneum (PubMed:16007253, PubMed:17927575). Co-localizes through the Golgi apparatus to the cell periphery with glucosylceramide (PubMed:17927575).</text>
</comment>
<comment type="alternative products">
    <event type="alternative splicing"/>
    <isoform>
        <id>Q86UK0-1</id>
        <name>1</name>
        <sequence type="displayed"/>
    </isoform>
    <isoform>
        <id>Q86UK0-2</id>
        <name>2</name>
        <sequence type="described" ref="VSP_011283 VSP_011284"/>
    </isoform>
    <text>Additional isoforms seem to exist.</text>
</comment>
<comment type="tissue specificity">
    <text evidence="6 9 13 15 18 23">Mainly expressed in the stomach, placenta, testis and fetal brain (PubMed:12697999). Expressed in the upper epidermal layers, mainly the granular layers, of skin (PubMed:16007253, PubMed:17591952, PubMed:17927575). Expressed throughout the normal interfollicular epidermis with prominent expression in the stratum granulosum (PubMed:19179616). Expressed in alpha and beta cells of pancreatic islets (PubMed:32072744).</text>
</comment>
<comment type="developmental stage">
    <text evidence="13">At about 6 to 9 weeks estimated gestational age (EGA), expressed in the periderm during the early period when the two-layered epidermis form. At 10 to 13 weeks EGA, expressed in the entire epidermis with high expression in periderm until to 14 to 22 weeks EGA.</text>
</comment>
<comment type="induction">
    <text evidence="9 13 14 20 29">Up-regulated during keratinization (PubMed:16007253). Up-regulated after 15 weeks estimated gestational age (EGA) (PubMed:17591952). Highly up-regulated by PPARG activators such as ciglitazone, troglitazone, and the PPARD activator GW 0742 in time- and dose-dependent manner but independently of keratinocyte differentiation. In addition, modestly up-regulated by the NR1H3 and NR1H2 activator TO901317 in an keratinocyte differentiation-independent manner (PubMed:17611579). Up-regulated by N-(hexanoyl)sphing-4-enine in a time- and dose-dependent manner or by glucosyltransferase inhibitors, ceramidase inhibitors and sphingomyelin synthase inhibitors that increase endogenous ceramide levels and induce ABCA12 expression via the PPARD signaling pathway (PubMed:19429679). Up-regulated by N-acetylsphingosine in a time- and dose-dependent manner via the PPARD signaling pathway (Probable).</text>
</comment>
<comment type="domain">
    <text evidence="1">Multifunctional polypeptide with two homologous halves, each containing a hydrophobic membrane-anchoring domain and an ATP binding cassette (ABC) domain.</text>
</comment>
<comment type="disease" evidence="7 12 16 19 22">
    <disease id="DI-00588">
        <name>Ichthyosis, congenital, autosomal recessive 4A</name>
        <acronym>ARCI4A</acronym>
        <description>A form of autosomal recessive congenital ichthyosis, a disorder of keratinization with abnormal differentiation and desquamation of the epidermis, resulting in abnormal skin scaling over the whole body. The main skin phenotypes are lamellar ichthyosis (LI) and non-bullous congenital ichthyosiform erythroderma (NCIE), although phenotypic overlap within the same patient or among patients from the same family can occur. Lamellar ichthyosis is a condition often associated with an embedment in a collodion-like membrane at birth; skin scales later develop, covering the entire body surface. Non-bullous congenital ichthyosiform erythroderma characterized by fine whitish scaling on an erythrodermal background; larger brownish scales are present on the buttocks, neck and legs.</description>
        <dbReference type="MIM" id="601277"/>
    </disease>
    <text>The disease is caused by variants affecting the gene represented in this entry.</text>
</comment>
<comment type="disease" evidence="9 10 11">
    <disease id="DI-00584">
        <name>Ichthyosis, congenital, autosomal recessive 4B</name>
        <acronym>ARCI4B</acronym>
        <description>A rare, very severe form of congenital ichthyosis, in which the neonate is born with a thick covering of armor-like scales. The skin dries out to form hard diamond-shaped plaques separated by fissures, resembling 'armor plating'. The normal facial features are severely affected, with distortion of the lips (eclabion), eyelids (ectropion), ears, and nostrils. Affected babies are often born prematurely and rarely survive the perinatal period. Babies who survive into infancy and beyond develop skin changes resembling severe non-bullous congenital ichthyosiform erythroderma.</description>
        <dbReference type="MIM" id="242500"/>
    </disease>
    <text>The disease is caused by variants affecting the gene represented in this entry.</text>
</comment>
<comment type="similarity">
    <text evidence="27">Belongs to the ABC transporter superfamily. ABCA family.</text>
</comment>
<comment type="sequence caution" evidence="27">
    <conflict type="erroneous initiation">
        <sequence resource="EMBL-CDS" id="AAN40735"/>
    </conflict>
</comment>
<comment type="online information" name="ABCMdb">
    <link uri="http://abcm2.hegelab.org/search"/>
    <text>Database for mutations in ABC proteins</text>
</comment>
<accession>Q86UK0</accession>
<accession>Q53QE2</accession>
<accession>Q53S55</accession>
<accession>Q8IZW6</accession>
<accession>Q96JT3</accession>
<accession>Q9Y4M5</accession>
<evidence type="ECO:0000250" key="1"/>
<evidence type="ECO:0000250" key="2">
    <source>
        <dbReference type="UniProtKB" id="E9Q876"/>
    </source>
</evidence>
<evidence type="ECO:0000255" key="3"/>
<evidence type="ECO:0000255" key="4">
    <source>
        <dbReference type="PROSITE-ProRule" id="PRU00434"/>
    </source>
</evidence>
<evidence type="ECO:0000256" key="5">
    <source>
        <dbReference type="SAM" id="MobiDB-lite"/>
    </source>
</evidence>
<evidence type="ECO:0000269" key="6">
    <source>
    </source>
</evidence>
<evidence type="ECO:0000269" key="7">
    <source>
    </source>
</evidence>
<evidence type="ECO:0000269" key="8">
    <source>
    </source>
</evidence>
<evidence type="ECO:0000269" key="9">
    <source>
    </source>
</evidence>
<evidence type="ECO:0000269" key="10">
    <source>
    </source>
</evidence>
<evidence type="ECO:0000269" key="11">
    <source>
    </source>
</evidence>
<evidence type="ECO:0000269" key="12">
    <source>
    </source>
</evidence>
<evidence type="ECO:0000269" key="13">
    <source>
    </source>
</evidence>
<evidence type="ECO:0000269" key="14">
    <source>
    </source>
</evidence>
<evidence type="ECO:0000269" key="15">
    <source>
    </source>
</evidence>
<evidence type="ECO:0000269" key="16">
    <source>
    </source>
</evidence>
<evidence type="ECO:0000269" key="17">
    <source>
    </source>
</evidence>
<evidence type="ECO:0000269" key="18">
    <source>
    </source>
</evidence>
<evidence type="ECO:0000269" key="19">
    <source>
    </source>
</evidence>
<evidence type="ECO:0000269" key="20">
    <source>
    </source>
</evidence>
<evidence type="ECO:0000269" key="21">
    <source>
    </source>
</evidence>
<evidence type="ECO:0000269" key="22">
    <source>
    </source>
</evidence>
<evidence type="ECO:0000269" key="23">
    <source>
    </source>
</evidence>
<evidence type="ECO:0000269" key="24">
    <source ref="2"/>
</evidence>
<evidence type="ECO:0000269" key="25">
    <source ref="4"/>
</evidence>
<evidence type="ECO:0000303" key="26">
    <source ref="2"/>
</evidence>
<evidence type="ECO:0000305" key="27"/>
<evidence type="ECO:0000305" key="28">
    <source>
    </source>
</evidence>
<evidence type="ECO:0000305" key="29">
    <source>
    </source>
</evidence>
<evidence type="ECO:0000305" key="30">
    <source>
    </source>
</evidence>
<evidence type="ECO:0000312" key="31">
    <source>
        <dbReference type="HGNC" id="HGNC:14637"/>
    </source>
</evidence>